<gene>
    <name evidence="1" type="primary">atpG</name>
    <name type="ordered locus">SG2413</name>
</gene>
<reference key="1">
    <citation type="journal article" date="2006" name="Genome Res.">
        <title>Massive genome erosion and functional adaptations provide insights into the symbiotic lifestyle of Sodalis glossinidius in the tsetse host.</title>
        <authorList>
            <person name="Toh H."/>
            <person name="Weiss B.L."/>
            <person name="Perkin S.A.H."/>
            <person name="Yamashita A."/>
            <person name="Oshima K."/>
            <person name="Hattori M."/>
            <person name="Aksoy S."/>
        </authorList>
    </citation>
    <scope>NUCLEOTIDE SEQUENCE [LARGE SCALE GENOMIC DNA]</scope>
    <source>
        <strain>morsitans</strain>
    </source>
</reference>
<feature type="chain" id="PRO_1000053341" description="ATP synthase gamma chain">
    <location>
        <begin position="1"/>
        <end position="287"/>
    </location>
</feature>
<comment type="function">
    <text evidence="1">Produces ATP from ADP in the presence of a proton gradient across the membrane. The gamma chain is believed to be important in regulating ATPase activity and the flow of protons through the CF(0) complex.</text>
</comment>
<comment type="subunit">
    <text evidence="1">F-type ATPases have 2 components, CF(1) - the catalytic core - and CF(0) - the membrane proton channel. CF(1) has five subunits: alpha(3), beta(3), gamma(1), delta(1), epsilon(1). CF(0) has three main subunits: a, b and c.</text>
</comment>
<comment type="subcellular location">
    <subcellularLocation>
        <location evidence="1">Cell inner membrane</location>
        <topology evidence="1">Peripheral membrane protein</topology>
    </subcellularLocation>
</comment>
<comment type="similarity">
    <text evidence="1">Belongs to the ATPase gamma chain family.</text>
</comment>
<accession>Q2NQ87</accession>
<dbReference type="EMBL" id="AP008232">
    <property type="protein sequence ID" value="BAE75688.1"/>
    <property type="molecule type" value="Genomic_DNA"/>
</dbReference>
<dbReference type="RefSeq" id="WP_011412218.1">
    <property type="nucleotide sequence ID" value="NC_007712.1"/>
</dbReference>
<dbReference type="SMR" id="Q2NQ87"/>
<dbReference type="STRING" id="343509.SG2413"/>
<dbReference type="KEGG" id="sgl:SG2413"/>
<dbReference type="eggNOG" id="COG0224">
    <property type="taxonomic scope" value="Bacteria"/>
</dbReference>
<dbReference type="HOGENOM" id="CLU_050669_0_1_6"/>
<dbReference type="OrthoDB" id="9812769at2"/>
<dbReference type="BioCyc" id="SGLO343509:SGP1_RS21880-MONOMER"/>
<dbReference type="Proteomes" id="UP000001932">
    <property type="component" value="Chromosome"/>
</dbReference>
<dbReference type="GO" id="GO:0005886">
    <property type="term" value="C:plasma membrane"/>
    <property type="evidence" value="ECO:0007669"/>
    <property type="project" value="UniProtKB-SubCell"/>
</dbReference>
<dbReference type="GO" id="GO:0045259">
    <property type="term" value="C:proton-transporting ATP synthase complex"/>
    <property type="evidence" value="ECO:0007669"/>
    <property type="project" value="UniProtKB-KW"/>
</dbReference>
<dbReference type="GO" id="GO:0005524">
    <property type="term" value="F:ATP binding"/>
    <property type="evidence" value="ECO:0007669"/>
    <property type="project" value="UniProtKB-UniRule"/>
</dbReference>
<dbReference type="GO" id="GO:0046933">
    <property type="term" value="F:proton-transporting ATP synthase activity, rotational mechanism"/>
    <property type="evidence" value="ECO:0007669"/>
    <property type="project" value="UniProtKB-UniRule"/>
</dbReference>
<dbReference type="GO" id="GO:0042777">
    <property type="term" value="P:proton motive force-driven plasma membrane ATP synthesis"/>
    <property type="evidence" value="ECO:0007669"/>
    <property type="project" value="UniProtKB-UniRule"/>
</dbReference>
<dbReference type="CDD" id="cd12151">
    <property type="entry name" value="F1-ATPase_gamma"/>
    <property type="match status" value="1"/>
</dbReference>
<dbReference type="FunFam" id="1.10.287.80:FF:000005">
    <property type="entry name" value="ATP synthase gamma chain"/>
    <property type="match status" value="2"/>
</dbReference>
<dbReference type="FunFam" id="3.40.1380.10:FF:000001">
    <property type="entry name" value="ATP synthase gamma chain"/>
    <property type="match status" value="1"/>
</dbReference>
<dbReference type="Gene3D" id="3.40.1380.10">
    <property type="match status" value="1"/>
</dbReference>
<dbReference type="Gene3D" id="1.10.287.80">
    <property type="entry name" value="ATP synthase, gamma subunit, helix hairpin domain"/>
    <property type="match status" value="2"/>
</dbReference>
<dbReference type="HAMAP" id="MF_00815">
    <property type="entry name" value="ATP_synth_gamma_bact"/>
    <property type="match status" value="1"/>
</dbReference>
<dbReference type="InterPro" id="IPR035968">
    <property type="entry name" value="ATP_synth_F1_ATPase_gsu"/>
</dbReference>
<dbReference type="InterPro" id="IPR000131">
    <property type="entry name" value="ATP_synth_F1_gsu"/>
</dbReference>
<dbReference type="InterPro" id="IPR023632">
    <property type="entry name" value="ATP_synth_F1_gsu_CS"/>
</dbReference>
<dbReference type="NCBIfam" id="TIGR01146">
    <property type="entry name" value="ATPsyn_F1gamma"/>
    <property type="match status" value="1"/>
</dbReference>
<dbReference type="NCBIfam" id="NF004144">
    <property type="entry name" value="PRK05621.1-1"/>
    <property type="match status" value="1"/>
</dbReference>
<dbReference type="PANTHER" id="PTHR11693">
    <property type="entry name" value="ATP SYNTHASE GAMMA CHAIN"/>
    <property type="match status" value="1"/>
</dbReference>
<dbReference type="PANTHER" id="PTHR11693:SF22">
    <property type="entry name" value="ATP SYNTHASE SUBUNIT GAMMA, MITOCHONDRIAL"/>
    <property type="match status" value="1"/>
</dbReference>
<dbReference type="Pfam" id="PF00231">
    <property type="entry name" value="ATP-synt"/>
    <property type="match status" value="1"/>
</dbReference>
<dbReference type="PRINTS" id="PR00126">
    <property type="entry name" value="ATPASEGAMMA"/>
</dbReference>
<dbReference type="SUPFAM" id="SSF52943">
    <property type="entry name" value="ATP synthase (F1-ATPase), gamma subunit"/>
    <property type="match status" value="1"/>
</dbReference>
<dbReference type="PROSITE" id="PS00153">
    <property type="entry name" value="ATPASE_GAMMA"/>
    <property type="match status" value="1"/>
</dbReference>
<organism>
    <name type="scientific">Sodalis glossinidius (strain morsitans)</name>
    <dbReference type="NCBI Taxonomy" id="343509"/>
    <lineage>
        <taxon>Bacteria</taxon>
        <taxon>Pseudomonadati</taxon>
        <taxon>Pseudomonadota</taxon>
        <taxon>Gammaproteobacteria</taxon>
        <taxon>Enterobacterales</taxon>
        <taxon>Bruguierivoracaceae</taxon>
        <taxon>Sodalis</taxon>
    </lineage>
</organism>
<sequence length="287" mass="31675">MAGAKEIRSKIASVQNTQKITKAMEMVAASKMRKTQERMASSRPYAETMRKVIGHLALGNLEYKHSYLDERDVKRVGYLVVATDRGLAGGLNINLFKKLLADMKEWNGKGVETELALIGSKAVSFFNSVGSKVVAQVTGMGDNPMLSELIGPVKVMLQAYDEGRLDKLYIVSNKFVNTMSQVPQILQILPLPPAEEADLKIKSWDYLYEPDPKTLLDTLLRRYVESQVYQGVVENLASEQAARMVAMKAATDNGGSLIKELQLVYNKARQTSITQELTEIVSGAAAV</sequence>
<evidence type="ECO:0000255" key="1">
    <source>
        <dbReference type="HAMAP-Rule" id="MF_00815"/>
    </source>
</evidence>
<name>ATPG_SODGM</name>
<proteinExistence type="inferred from homology"/>
<keyword id="KW-0066">ATP synthesis</keyword>
<keyword id="KW-0997">Cell inner membrane</keyword>
<keyword id="KW-1003">Cell membrane</keyword>
<keyword id="KW-0139">CF(1)</keyword>
<keyword id="KW-0375">Hydrogen ion transport</keyword>
<keyword id="KW-0406">Ion transport</keyword>
<keyword id="KW-0472">Membrane</keyword>
<keyword id="KW-0813">Transport</keyword>
<protein>
    <recommendedName>
        <fullName evidence="1">ATP synthase gamma chain</fullName>
    </recommendedName>
    <alternativeName>
        <fullName evidence="1">ATP synthase F1 sector gamma subunit</fullName>
    </alternativeName>
    <alternativeName>
        <fullName evidence="1">F-ATPase gamma subunit</fullName>
    </alternativeName>
</protein>